<evidence type="ECO:0000250" key="1">
    <source>
        <dbReference type="UniProtKB" id="P11766"/>
    </source>
</evidence>
<evidence type="ECO:0000250" key="2">
    <source>
        <dbReference type="UniProtKB" id="P25437"/>
    </source>
</evidence>
<evidence type="ECO:0000305" key="3"/>
<proteinExistence type="inferred from homology"/>
<keyword id="KW-0963">Cytoplasm</keyword>
<keyword id="KW-0479">Metal-binding</keyword>
<keyword id="KW-0520">NAD</keyword>
<keyword id="KW-0560">Oxidoreductase</keyword>
<keyword id="KW-1185">Reference proteome</keyword>
<keyword id="KW-0862">Zinc</keyword>
<sequence length="369" mass="39211">MKSRAAVAFEVGKPLQIVEIDVAPPQQGEVLVKITHTGVCHTDAFTLSGDDPEGLFPVVLGHEGAGIVVEVGEGVTSVQLGDHVIPLYTAECGKCLFCRSGKTNLCVAVRATQGKGVMPDGTSRFSYNGQSLYHYMGCSTFSEYTVVAEVSLAKINPEANHEHVCLLGCGVTTGIGAVHNTAKVQPGDSVAVFGLGGIGLAVVQGARQAKAGRIIAIDTNPAKFELAKQMGATDCINPKDHDQPIQQVIVEMTGWGVDHSFECIGNVEVMRSALECAHRGWGQSVIIGVAGAGQEISTRPFQLVTGRKWMGTAFGGVKGRSQLPGMVEQSMRGEIQLAPFVTHTMELKDINQAFDLMHDGKSIRSVIHY</sequence>
<organism>
    <name type="scientific">Synechocystis sp. (strain ATCC 27184 / PCC 6803 / Kazusa)</name>
    <dbReference type="NCBI Taxonomy" id="1111708"/>
    <lineage>
        <taxon>Bacteria</taxon>
        <taxon>Bacillati</taxon>
        <taxon>Cyanobacteriota</taxon>
        <taxon>Cyanophyceae</taxon>
        <taxon>Synechococcales</taxon>
        <taxon>Merismopediaceae</taxon>
        <taxon>Synechocystis</taxon>
    </lineage>
</organism>
<dbReference type="EC" id="1.1.1.284"/>
<dbReference type="EC" id="1.1.1.1"/>
<dbReference type="EC" id="1.1.1.-"/>
<dbReference type="EMBL" id="BA000022">
    <property type="protein sequence ID" value="BAA17164.1"/>
    <property type="molecule type" value="Genomic_DNA"/>
</dbReference>
<dbReference type="PIR" id="S75250">
    <property type="entry name" value="S75250"/>
</dbReference>
<dbReference type="SMR" id="P73138"/>
<dbReference type="FunCoup" id="P73138">
    <property type="interactions" value="331"/>
</dbReference>
<dbReference type="STRING" id="1148.gene:10498026"/>
<dbReference type="PaxDb" id="1148-1652241"/>
<dbReference type="EnsemblBacteria" id="BAA17164">
    <property type="protein sequence ID" value="BAA17164"/>
    <property type="gene ID" value="BAA17164"/>
</dbReference>
<dbReference type="KEGG" id="syn:sll0990"/>
<dbReference type="eggNOG" id="COG1062">
    <property type="taxonomic scope" value="Bacteria"/>
</dbReference>
<dbReference type="InParanoid" id="P73138"/>
<dbReference type="PhylomeDB" id="P73138"/>
<dbReference type="Proteomes" id="UP000001425">
    <property type="component" value="Chromosome"/>
</dbReference>
<dbReference type="GO" id="GO:0005829">
    <property type="term" value="C:cytosol"/>
    <property type="evidence" value="ECO:0000318"/>
    <property type="project" value="GO_Central"/>
</dbReference>
<dbReference type="GO" id="GO:0004022">
    <property type="term" value="F:alcohol dehydrogenase (NAD+) activity"/>
    <property type="evidence" value="ECO:0000318"/>
    <property type="project" value="GO_Central"/>
</dbReference>
<dbReference type="GO" id="GO:0106322">
    <property type="term" value="F:S-(hydroxymethyl)glutathione dehydrogenase (NAD+) activity"/>
    <property type="evidence" value="ECO:0007669"/>
    <property type="project" value="RHEA"/>
</dbReference>
<dbReference type="GO" id="GO:0106321">
    <property type="term" value="F:S-(hydroxymethyl)glutathione dehydrogenase (NADP+) activity"/>
    <property type="evidence" value="ECO:0007669"/>
    <property type="project" value="RHEA"/>
</dbReference>
<dbReference type="GO" id="GO:0051903">
    <property type="term" value="F:S-(hydroxymethyl)glutathione dehydrogenase [NAD(P)+] activity"/>
    <property type="evidence" value="ECO:0000318"/>
    <property type="project" value="GO_Central"/>
</dbReference>
<dbReference type="GO" id="GO:0080007">
    <property type="term" value="F:S-nitrosoglutathione reductase (NADH) activity"/>
    <property type="evidence" value="ECO:0007669"/>
    <property type="project" value="RHEA"/>
</dbReference>
<dbReference type="GO" id="GO:0008270">
    <property type="term" value="F:zinc ion binding"/>
    <property type="evidence" value="ECO:0000318"/>
    <property type="project" value="GO_Central"/>
</dbReference>
<dbReference type="GO" id="GO:0046294">
    <property type="term" value="P:formaldehyde catabolic process"/>
    <property type="evidence" value="ECO:0000318"/>
    <property type="project" value="GO_Central"/>
</dbReference>
<dbReference type="CDD" id="cd08300">
    <property type="entry name" value="alcohol_DH_class_III"/>
    <property type="match status" value="1"/>
</dbReference>
<dbReference type="FunFam" id="3.40.50.720:FF:000003">
    <property type="entry name" value="S-(hydroxymethyl)glutathione dehydrogenase"/>
    <property type="match status" value="1"/>
</dbReference>
<dbReference type="FunFam" id="3.90.180.10:FF:000001">
    <property type="entry name" value="S-(hydroxymethyl)glutathione dehydrogenase"/>
    <property type="match status" value="1"/>
</dbReference>
<dbReference type="Gene3D" id="3.90.180.10">
    <property type="entry name" value="Medium-chain alcohol dehydrogenases, catalytic domain"/>
    <property type="match status" value="1"/>
</dbReference>
<dbReference type="Gene3D" id="3.40.50.720">
    <property type="entry name" value="NAD(P)-binding Rossmann-like Domain"/>
    <property type="match status" value="1"/>
</dbReference>
<dbReference type="InterPro" id="IPR013149">
    <property type="entry name" value="ADH-like_C"/>
</dbReference>
<dbReference type="InterPro" id="IPR013154">
    <property type="entry name" value="ADH-like_N"/>
</dbReference>
<dbReference type="InterPro" id="IPR014183">
    <property type="entry name" value="ADH_3"/>
</dbReference>
<dbReference type="InterPro" id="IPR002328">
    <property type="entry name" value="ADH_Zn_CS"/>
</dbReference>
<dbReference type="InterPro" id="IPR011032">
    <property type="entry name" value="GroES-like_sf"/>
</dbReference>
<dbReference type="InterPro" id="IPR036291">
    <property type="entry name" value="NAD(P)-bd_dom_sf"/>
</dbReference>
<dbReference type="InterPro" id="IPR020843">
    <property type="entry name" value="PKS_ER"/>
</dbReference>
<dbReference type="NCBIfam" id="TIGR02818">
    <property type="entry name" value="adh_III_F_hyde"/>
    <property type="match status" value="1"/>
</dbReference>
<dbReference type="PANTHER" id="PTHR43880">
    <property type="entry name" value="ALCOHOL DEHYDROGENASE"/>
    <property type="match status" value="1"/>
</dbReference>
<dbReference type="PANTHER" id="PTHR43880:SF12">
    <property type="entry name" value="ALCOHOL DEHYDROGENASE CLASS-3"/>
    <property type="match status" value="1"/>
</dbReference>
<dbReference type="Pfam" id="PF08240">
    <property type="entry name" value="ADH_N"/>
    <property type="match status" value="1"/>
</dbReference>
<dbReference type="Pfam" id="PF00107">
    <property type="entry name" value="ADH_zinc_N"/>
    <property type="match status" value="1"/>
</dbReference>
<dbReference type="SMART" id="SM00829">
    <property type="entry name" value="PKS_ER"/>
    <property type="match status" value="1"/>
</dbReference>
<dbReference type="SUPFAM" id="SSF50129">
    <property type="entry name" value="GroES-like"/>
    <property type="match status" value="2"/>
</dbReference>
<dbReference type="SUPFAM" id="SSF51735">
    <property type="entry name" value="NAD(P)-binding Rossmann-fold domains"/>
    <property type="match status" value="1"/>
</dbReference>
<dbReference type="PROSITE" id="PS00059">
    <property type="entry name" value="ADH_ZINC"/>
    <property type="match status" value="1"/>
</dbReference>
<name>FRMA_SYNY3</name>
<gene>
    <name type="primary">frmA</name>
    <name type="ordered locus">sll0990</name>
</gene>
<reference key="1">
    <citation type="journal article" date="1996" name="DNA Res.">
        <title>Sequence analysis of the genome of the unicellular cyanobacterium Synechocystis sp. strain PCC6803. II. Sequence determination of the entire genome and assignment of potential protein-coding regions.</title>
        <authorList>
            <person name="Kaneko T."/>
            <person name="Sato S."/>
            <person name="Kotani H."/>
            <person name="Tanaka A."/>
            <person name="Asamizu E."/>
            <person name="Nakamura Y."/>
            <person name="Miyajima N."/>
            <person name="Hirosawa M."/>
            <person name="Sugiura M."/>
            <person name="Sasamoto S."/>
            <person name="Kimura T."/>
            <person name="Hosouchi T."/>
            <person name="Matsuno A."/>
            <person name="Muraki A."/>
            <person name="Nakazaki N."/>
            <person name="Naruo K."/>
            <person name="Okumura S."/>
            <person name="Shimpo S."/>
            <person name="Takeuchi C."/>
            <person name="Wada T."/>
            <person name="Watanabe A."/>
            <person name="Yamada M."/>
            <person name="Yasuda M."/>
            <person name="Tabata S."/>
        </authorList>
    </citation>
    <scope>NUCLEOTIDE SEQUENCE [LARGE SCALE GENOMIC DNA]</scope>
    <source>
        <strain>ATCC 27184 / PCC 6803 / Kazusa</strain>
    </source>
</reference>
<comment type="function">
    <text evidence="2">Has high formaldehyde dehydrogenase activity in the presence of glutathione and catalyzes the oxidation of normal alcohols in a reaction that is not GSH-dependent. In addition, hemithiolacetals other than those formed from GSH, including omega-thiol fatty acids, also are substrates. Also acts as a S-nitroso-glutathione reductase by catalyzing the NADH-dependent reduction of S-nitrosoglutathione.</text>
</comment>
<comment type="catalytic activity">
    <reaction evidence="2">
        <text>S-(hydroxymethyl)glutathione + NADP(+) = S-formylglutathione + NADPH + H(+)</text>
        <dbReference type="Rhea" id="RHEA:19981"/>
        <dbReference type="ChEBI" id="CHEBI:15378"/>
        <dbReference type="ChEBI" id="CHEBI:57688"/>
        <dbReference type="ChEBI" id="CHEBI:57783"/>
        <dbReference type="ChEBI" id="CHEBI:58349"/>
        <dbReference type="ChEBI" id="CHEBI:58758"/>
        <dbReference type="EC" id="1.1.1.284"/>
    </reaction>
</comment>
<comment type="catalytic activity">
    <reaction evidence="2">
        <text>S-(hydroxymethyl)glutathione + NAD(+) = S-formylglutathione + NADH + H(+)</text>
        <dbReference type="Rhea" id="RHEA:19985"/>
        <dbReference type="ChEBI" id="CHEBI:15378"/>
        <dbReference type="ChEBI" id="CHEBI:57540"/>
        <dbReference type="ChEBI" id="CHEBI:57688"/>
        <dbReference type="ChEBI" id="CHEBI:57945"/>
        <dbReference type="ChEBI" id="CHEBI:58758"/>
        <dbReference type="EC" id="1.1.1.284"/>
    </reaction>
</comment>
<comment type="catalytic activity">
    <reaction evidence="2">
        <text>a primary alcohol + NAD(+) = an aldehyde + NADH + H(+)</text>
        <dbReference type="Rhea" id="RHEA:10736"/>
        <dbReference type="ChEBI" id="CHEBI:15378"/>
        <dbReference type="ChEBI" id="CHEBI:15734"/>
        <dbReference type="ChEBI" id="CHEBI:17478"/>
        <dbReference type="ChEBI" id="CHEBI:57540"/>
        <dbReference type="ChEBI" id="CHEBI:57945"/>
        <dbReference type="EC" id="1.1.1.1"/>
    </reaction>
</comment>
<comment type="catalytic activity">
    <reaction evidence="2">
        <text>a secondary alcohol + NAD(+) = a ketone + NADH + H(+)</text>
        <dbReference type="Rhea" id="RHEA:10740"/>
        <dbReference type="ChEBI" id="CHEBI:15378"/>
        <dbReference type="ChEBI" id="CHEBI:17087"/>
        <dbReference type="ChEBI" id="CHEBI:35681"/>
        <dbReference type="ChEBI" id="CHEBI:57540"/>
        <dbReference type="ChEBI" id="CHEBI:57945"/>
        <dbReference type="EC" id="1.1.1.1"/>
    </reaction>
</comment>
<comment type="catalytic activity">
    <reaction evidence="2">
        <text>S-nitrosoglutathione + NADH + H(+) = S-(hydroxysulfenamide)glutathione + NAD(+)</text>
        <dbReference type="Rhea" id="RHEA:78371"/>
        <dbReference type="ChEBI" id="CHEBI:15378"/>
        <dbReference type="ChEBI" id="CHEBI:57540"/>
        <dbReference type="ChEBI" id="CHEBI:57945"/>
        <dbReference type="ChEBI" id="CHEBI:145544"/>
        <dbReference type="ChEBI" id="CHEBI:229723"/>
    </reaction>
    <physiologicalReaction direction="left-to-right" evidence="2">
        <dbReference type="Rhea" id="RHEA:78372"/>
    </physiologicalReaction>
</comment>
<comment type="cofactor">
    <cofactor evidence="1">
        <name>Zn(2+)</name>
        <dbReference type="ChEBI" id="CHEBI:29105"/>
    </cofactor>
    <text evidence="1">Binds 2 Zn(2+) ions per subunit.</text>
</comment>
<comment type="subunit">
    <text evidence="2">Homodimer.</text>
</comment>
<comment type="subcellular location">
    <subcellularLocation>
        <location evidence="2">Cytoplasm</location>
    </subcellularLocation>
</comment>
<comment type="similarity">
    <text evidence="3">Belongs to the zinc-containing alcohol dehydrogenase family. Class-III subfamily.</text>
</comment>
<protein>
    <recommendedName>
        <fullName>S-(hydroxymethyl)glutathione dehydrogenase</fullName>
        <ecNumber>1.1.1.284</ecNumber>
    </recommendedName>
    <alternativeName>
        <fullName>Alcohol dehydrogenase class-3</fullName>
        <ecNumber>1.1.1.1</ecNumber>
    </alternativeName>
    <alternativeName>
        <fullName>Alcohol dehydrogenase class-III</fullName>
    </alternativeName>
    <alternativeName>
        <fullName>Glutathione-dependent formaldehyde dehydrogenase</fullName>
        <shortName>FALDH</shortName>
        <shortName>FDH</shortName>
        <shortName>GSH-FDH</shortName>
        <ecNumber>1.1.1.-</ecNumber>
    </alternativeName>
</protein>
<feature type="chain" id="PRO_0000160778" description="S-(hydroxymethyl)glutathione dehydrogenase">
    <location>
        <begin position="1"/>
        <end position="369"/>
    </location>
</feature>
<feature type="binding site" evidence="1">
    <location>
        <position position="40"/>
    </location>
    <ligand>
        <name>Zn(2+)</name>
        <dbReference type="ChEBI" id="CHEBI:29105"/>
        <label>1</label>
        <note>catalytic</note>
    </ligand>
</feature>
<feature type="binding site" evidence="1">
    <location>
        <position position="62"/>
    </location>
    <ligand>
        <name>Zn(2+)</name>
        <dbReference type="ChEBI" id="CHEBI:29105"/>
        <label>1</label>
        <note>catalytic</note>
    </ligand>
</feature>
<feature type="binding site" evidence="1">
    <location>
        <position position="92"/>
    </location>
    <ligand>
        <name>Zn(2+)</name>
        <dbReference type="ChEBI" id="CHEBI:29105"/>
        <label>2</label>
    </ligand>
</feature>
<feature type="binding site" evidence="1">
    <location>
        <position position="95"/>
    </location>
    <ligand>
        <name>Zn(2+)</name>
        <dbReference type="ChEBI" id="CHEBI:29105"/>
        <label>2</label>
    </ligand>
</feature>
<feature type="binding site" evidence="1">
    <location>
        <position position="98"/>
    </location>
    <ligand>
        <name>Zn(2+)</name>
        <dbReference type="ChEBI" id="CHEBI:29105"/>
        <label>2</label>
    </ligand>
</feature>
<feature type="binding site" evidence="1">
    <location>
        <position position="106"/>
    </location>
    <ligand>
        <name>Zn(2+)</name>
        <dbReference type="ChEBI" id="CHEBI:29105"/>
        <label>2</label>
    </ligand>
</feature>
<feature type="binding site" evidence="1">
    <location>
        <position position="169"/>
    </location>
    <ligand>
        <name>Zn(2+)</name>
        <dbReference type="ChEBI" id="CHEBI:29105"/>
        <label>1</label>
        <note>catalytic</note>
    </ligand>
</feature>
<accession>P73138</accession>